<organism>
    <name type="scientific">Gluconobacter oxydans (strain 621H)</name>
    <name type="common">Gluconobacter suboxydans</name>
    <dbReference type="NCBI Taxonomy" id="290633"/>
    <lineage>
        <taxon>Bacteria</taxon>
        <taxon>Pseudomonadati</taxon>
        <taxon>Pseudomonadota</taxon>
        <taxon>Alphaproteobacteria</taxon>
        <taxon>Acetobacterales</taxon>
        <taxon>Acetobacteraceae</taxon>
        <taxon>Gluconobacter</taxon>
    </lineage>
</organism>
<proteinExistence type="inferred from homology"/>
<name>MURB_GLUOX</name>
<sequence length="306" mass="32468">MTGSSDFPVKGLRGRLTPNAPLGPRAWFRVGGPADWLFVPEDQDDLALFLREKPATMPVTVLGACSNVIIRDGGIAGTVIRLARGFADITVQGNSLIVGAAALDITVAEHAAAAGLAGLEFLAGIPGSIGGAVRMNAGAYGSDINAVFEWADILTAEGELRRLSHDELGFAYRHSELPEGSVVIRASLRGTPDNADAIRSRIADIRASREASQPVRARTGGSTFRNPDGHKAWQLIDEAGCRGLQIGDAQVSEKHCNFLLNLGQASSADLETLGETVREKVLAQSGVDLHWEIKRIGRKSEGEQTV</sequence>
<protein>
    <recommendedName>
        <fullName evidence="1">UDP-N-acetylenolpyruvoylglucosamine reductase</fullName>
        <ecNumber evidence="1">1.3.1.98</ecNumber>
    </recommendedName>
    <alternativeName>
        <fullName evidence="1">UDP-N-acetylmuramate dehydrogenase</fullName>
    </alternativeName>
</protein>
<gene>
    <name evidence="1" type="primary">murB</name>
    <name type="ordered locus">GOX0160</name>
</gene>
<accession>Q5FUJ3</accession>
<dbReference type="EC" id="1.3.1.98" evidence="1"/>
<dbReference type="EMBL" id="CP000009">
    <property type="protein sequence ID" value="AAW59953.1"/>
    <property type="molecule type" value="Genomic_DNA"/>
</dbReference>
<dbReference type="RefSeq" id="WP_011251756.1">
    <property type="nucleotide sequence ID" value="NC_006677.1"/>
</dbReference>
<dbReference type="SMR" id="Q5FUJ3"/>
<dbReference type="STRING" id="290633.GOX0160"/>
<dbReference type="KEGG" id="gox:GOX0160"/>
<dbReference type="eggNOG" id="COG0812">
    <property type="taxonomic scope" value="Bacteria"/>
</dbReference>
<dbReference type="HOGENOM" id="CLU_035304_1_0_5"/>
<dbReference type="UniPathway" id="UPA00219"/>
<dbReference type="Proteomes" id="UP000006375">
    <property type="component" value="Chromosome"/>
</dbReference>
<dbReference type="GO" id="GO:0005829">
    <property type="term" value="C:cytosol"/>
    <property type="evidence" value="ECO:0007669"/>
    <property type="project" value="TreeGrafter"/>
</dbReference>
<dbReference type="GO" id="GO:0071949">
    <property type="term" value="F:FAD binding"/>
    <property type="evidence" value="ECO:0007669"/>
    <property type="project" value="InterPro"/>
</dbReference>
<dbReference type="GO" id="GO:0008762">
    <property type="term" value="F:UDP-N-acetylmuramate dehydrogenase activity"/>
    <property type="evidence" value="ECO:0007669"/>
    <property type="project" value="UniProtKB-UniRule"/>
</dbReference>
<dbReference type="GO" id="GO:0051301">
    <property type="term" value="P:cell division"/>
    <property type="evidence" value="ECO:0007669"/>
    <property type="project" value="UniProtKB-KW"/>
</dbReference>
<dbReference type="GO" id="GO:0071555">
    <property type="term" value="P:cell wall organization"/>
    <property type="evidence" value="ECO:0007669"/>
    <property type="project" value="UniProtKB-KW"/>
</dbReference>
<dbReference type="GO" id="GO:0009252">
    <property type="term" value="P:peptidoglycan biosynthetic process"/>
    <property type="evidence" value="ECO:0007669"/>
    <property type="project" value="UniProtKB-UniRule"/>
</dbReference>
<dbReference type="GO" id="GO:0008360">
    <property type="term" value="P:regulation of cell shape"/>
    <property type="evidence" value="ECO:0007669"/>
    <property type="project" value="UniProtKB-KW"/>
</dbReference>
<dbReference type="Gene3D" id="3.30.465.10">
    <property type="match status" value="1"/>
</dbReference>
<dbReference type="Gene3D" id="3.90.78.10">
    <property type="entry name" value="UDP-N-acetylenolpyruvoylglucosamine reductase, C-terminal domain"/>
    <property type="match status" value="1"/>
</dbReference>
<dbReference type="Gene3D" id="3.30.43.10">
    <property type="entry name" value="Uridine Diphospho-n-acetylenolpyruvylglucosamine Reductase, domain 2"/>
    <property type="match status" value="1"/>
</dbReference>
<dbReference type="HAMAP" id="MF_00037">
    <property type="entry name" value="MurB"/>
    <property type="match status" value="1"/>
</dbReference>
<dbReference type="InterPro" id="IPR016166">
    <property type="entry name" value="FAD-bd_PCMH"/>
</dbReference>
<dbReference type="InterPro" id="IPR036318">
    <property type="entry name" value="FAD-bd_PCMH-like_sf"/>
</dbReference>
<dbReference type="InterPro" id="IPR016167">
    <property type="entry name" value="FAD-bd_PCMH_sub1"/>
</dbReference>
<dbReference type="InterPro" id="IPR016169">
    <property type="entry name" value="FAD-bd_PCMH_sub2"/>
</dbReference>
<dbReference type="InterPro" id="IPR003170">
    <property type="entry name" value="MurB"/>
</dbReference>
<dbReference type="InterPro" id="IPR011601">
    <property type="entry name" value="MurB_C"/>
</dbReference>
<dbReference type="InterPro" id="IPR036635">
    <property type="entry name" value="MurB_C_sf"/>
</dbReference>
<dbReference type="InterPro" id="IPR006094">
    <property type="entry name" value="Oxid_FAD_bind_N"/>
</dbReference>
<dbReference type="NCBIfam" id="TIGR00179">
    <property type="entry name" value="murB"/>
    <property type="match status" value="1"/>
</dbReference>
<dbReference type="NCBIfam" id="NF010480">
    <property type="entry name" value="PRK13905.1"/>
    <property type="match status" value="1"/>
</dbReference>
<dbReference type="PANTHER" id="PTHR21071">
    <property type="entry name" value="UDP-N-ACETYLENOLPYRUVOYLGLUCOSAMINE REDUCTASE"/>
    <property type="match status" value="1"/>
</dbReference>
<dbReference type="PANTHER" id="PTHR21071:SF4">
    <property type="entry name" value="UDP-N-ACETYLENOLPYRUVOYLGLUCOSAMINE REDUCTASE"/>
    <property type="match status" value="1"/>
</dbReference>
<dbReference type="Pfam" id="PF01565">
    <property type="entry name" value="FAD_binding_4"/>
    <property type="match status" value="1"/>
</dbReference>
<dbReference type="Pfam" id="PF02873">
    <property type="entry name" value="MurB_C"/>
    <property type="match status" value="1"/>
</dbReference>
<dbReference type="SUPFAM" id="SSF56176">
    <property type="entry name" value="FAD-binding/transporter-associated domain-like"/>
    <property type="match status" value="1"/>
</dbReference>
<dbReference type="SUPFAM" id="SSF56194">
    <property type="entry name" value="Uridine diphospho-N-Acetylenolpyruvylglucosamine reductase, MurB, C-terminal domain"/>
    <property type="match status" value="1"/>
</dbReference>
<dbReference type="PROSITE" id="PS51387">
    <property type="entry name" value="FAD_PCMH"/>
    <property type="match status" value="1"/>
</dbReference>
<evidence type="ECO:0000255" key="1">
    <source>
        <dbReference type="HAMAP-Rule" id="MF_00037"/>
    </source>
</evidence>
<reference key="1">
    <citation type="journal article" date="2005" name="Nat. Biotechnol.">
        <title>Complete genome sequence of the acetic acid bacterium Gluconobacter oxydans.</title>
        <authorList>
            <person name="Prust C."/>
            <person name="Hoffmeister M."/>
            <person name="Liesegang H."/>
            <person name="Wiezer A."/>
            <person name="Fricke W.F."/>
            <person name="Ehrenreich A."/>
            <person name="Gottschalk G."/>
            <person name="Deppenmeier U."/>
        </authorList>
    </citation>
    <scope>NUCLEOTIDE SEQUENCE [LARGE SCALE GENOMIC DNA]</scope>
    <source>
        <strain>621H</strain>
    </source>
</reference>
<feature type="chain" id="PRO_0000224686" description="UDP-N-acetylenolpyruvoylglucosamine reductase">
    <location>
        <begin position="1"/>
        <end position="306"/>
    </location>
</feature>
<feature type="domain" description="FAD-binding PCMH-type" evidence="1">
    <location>
        <begin position="29"/>
        <end position="193"/>
    </location>
</feature>
<feature type="active site" evidence="1">
    <location>
        <position position="173"/>
    </location>
</feature>
<feature type="active site" description="Proton donor" evidence="1">
    <location>
        <position position="222"/>
    </location>
</feature>
<feature type="active site" evidence="1">
    <location>
        <position position="292"/>
    </location>
</feature>
<comment type="function">
    <text evidence="1">Cell wall formation.</text>
</comment>
<comment type="catalytic activity">
    <reaction evidence="1">
        <text>UDP-N-acetyl-alpha-D-muramate + NADP(+) = UDP-N-acetyl-3-O-(1-carboxyvinyl)-alpha-D-glucosamine + NADPH + H(+)</text>
        <dbReference type="Rhea" id="RHEA:12248"/>
        <dbReference type="ChEBI" id="CHEBI:15378"/>
        <dbReference type="ChEBI" id="CHEBI:57783"/>
        <dbReference type="ChEBI" id="CHEBI:58349"/>
        <dbReference type="ChEBI" id="CHEBI:68483"/>
        <dbReference type="ChEBI" id="CHEBI:70757"/>
        <dbReference type="EC" id="1.3.1.98"/>
    </reaction>
</comment>
<comment type="cofactor">
    <cofactor evidence="1">
        <name>FAD</name>
        <dbReference type="ChEBI" id="CHEBI:57692"/>
    </cofactor>
</comment>
<comment type="pathway">
    <text evidence="1">Cell wall biogenesis; peptidoglycan biosynthesis.</text>
</comment>
<comment type="subcellular location">
    <subcellularLocation>
        <location evidence="1">Cytoplasm</location>
    </subcellularLocation>
</comment>
<comment type="similarity">
    <text evidence="1">Belongs to the MurB family.</text>
</comment>
<keyword id="KW-0131">Cell cycle</keyword>
<keyword id="KW-0132">Cell division</keyword>
<keyword id="KW-0133">Cell shape</keyword>
<keyword id="KW-0961">Cell wall biogenesis/degradation</keyword>
<keyword id="KW-0963">Cytoplasm</keyword>
<keyword id="KW-0274">FAD</keyword>
<keyword id="KW-0285">Flavoprotein</keyword>
<keyword id="KW-0521">NADP</keyword>
<keyword id="KW-0560">Oxidoreductase</keyword>
<keyword id="KW-0573">Peptidoglycan synthesis</keyword>
<keyword id="KW-1185">Reference proteome</keyword>